<accession>Q2VNC6</accession>
<dbReference type="EC" id="3.1.-.-" evidence="2"/>
<dbReference type="EMBL" id="CY006712">
    <property type="protein sequence ID" value="ABB96348.1"/>
    <property type="molecule type" value="Genomic_RNA"/>
</dbReference>
<dbReference type="SMR" id="Q2VNC6"/>
<dbReference type="MEROPS" id="S62.001"/>
<dbReference type="Proteomes" id="UP000008574">
    <property type="component" value="Genome"/>
</dbReference>
<dbReference type="GO" id="GO:0030430">
    <property type="term" value="C:host cell cytoplasm"/>
    <property type="evidence" value="ECO:0007669"/>
    <property type="project" value="UniProtKB-SubCell"/>
</dbReference>
<dbReference type="GO" id="GO:0042025">
    <property type="term" value="C:host cell nucleus"/>
    <property type="evidence" value="ECO:0007669"/>
    <property type="project" value="UniProtKB-SubCell"/>
</dbReference>
<dbReference type="GO" id="GO:0004519">
    <property type="term" value="F:endonuclease activity"/>
    <property type="evidence" value="ECO:0007669"/>
    <property type="project" value="UniProtKB-KW"/>
</dbReference>
<dbReference type="GO" id="GO:0046872">
    <property type="term" value="F:metal ion binding"/>
    <property type="evidence" value="ECO:0007669"/>
    <property type="project" value="UniProtKB-KW"/>
</dbReference>
<dbReference type="GO" id="GO:0003723">
    <property type="term" value="F:RNA binding"/>
    <property type="evidence" value="ECO:0007669"/>
    <property type="project" value="UniProtKB-UniRule"/>
</dbReference>
<dbReference type="GO" id="GO:0075526">
    <property type="term" value="P:cap snatching"/>
    <property type="evidence" value="ECO:0007669"/>
    <property type="project" value="UniProtKB-UniRule"/>
</dbReference>
<dbReference type="GO" id="GO:0006351">
    <property type="term" value="P:DNA-templated transcription"/>
    <property type="evidence" value="ECO:0007669"/>
    <property type="project" value="UniProtKB-UniRule"/>
</dbReference>
<dbReference type="GO" id="GO:0039657">
    <property type="term" value="P:symbiont-mediated suppression of host gene expression"/>
    <property type="evidence" value="ECO:0007669"/>
    <property type="project" value="UniProtKB-KW"/>
</dbReference>
<dbReference type="GO" id="GO:0039523">
    <property type="term" value="P:symbiont-mediated suppression of host mRNA transcription via inhibition of RNA polymerase II activity"/>
    <property type="evidence" value="ECO:0007669"/>
    <property type="project" value="UniProtKB-UniRule"/>
</dbReference>
<dbReference type="GO" id="GO:0039694">
    <property type="term" value="P:viral RNA genome replication"/>
    <property type="evidence" value="ECO:0007669"/>
    <property type="project" value="InterPro"/>
</dbReference>
<dbReference type="GO" id="GO:0075523">
    <property type="term" value="P:viral translational frameshifting"/>
    <property type="evidence" value="ECO:0007669"/>
    <property type="project" value="UniProtKB-KW"/>
</dbReference>
<dbReference type="FunFam" id="3.40.91.90:FF:000001">
    <property type="entry name" value="Polymerase acidic protein"/>
    <property type="match status" value="1"/>
</dbReference>
<dbReference type="Gene3D" id="3.40.91.90">
    <property type="entry name" value="Influenza RNA-dependent RNA polymerase subunit PA, endonuclease domain"/>
    <property type="match status" value="1"/>
</dbReference>
<dbReference type="HAMAP" id="MF_04063">
    <property type="entry name" value="INFV_PA"/>
    <property type="match status" value="1"/>
</dbReference>
<dbReference type="InterPro" id="IPR037534">
    <property type="entry name" value="INFV_PA"/>
</dbReference>
<dbReference type="InterPro" id="IPR001009">
    <property type="entry name" value="PA/PA-X"/>
</dbReference>
<dbReference type="InterPro" id="IPR038372">
    <property type="entry name" value="PA/PA-X_sf"/>
</dbReference>
<dbReference type="Pfam" id="PF00603">
    <property type="entry name" value="Flu_PA"/>
    <property type="match status" value="1"/>
</dbReference>
<sequence>MEDFVRQCFNPMIVELAEKAMKEYGEDLKIETNKFAAICTHLEVCFMYSDFHFINEQGESIVVELDDPNALLKHRFEIIEGRDRTMAWTVVNSICNTTGAEKPKFLPDLYDYKENRFIEIGVTRREVHIYYLEKANKIKSENTHIHIFSFTGEEMATKADYTLDEESRARIKTRLFTIRQEMANRGLWDSFRQSERGEETIEERFEITGTMRRLADQSLPPNFSCLENFRAYVDGFEPNGCIEGKLSQMSKEVNAKIEPFLKTTPRPIKLPDGPPCFQRSKFLLMDALKLSIEDPSHEGEGIPLYDAIKCMRTFFGWKEPYIVKPHEKGINSNYLLSWKQVLAELQDIENEEKIPRTKNMKKTSQLKWALGENMAPEKVDFDNCRDISDLKQYDSDEPELRSLSSWIQNEFNKACELTDSIWIELDEIGEDVAPIEYIASMRRNYFTAEVSHCRATEYIMKGVYINTALLNASCAAMDDFQLIPMISKCRTKEGRRKTNLYGFIIKGRSHLRNDTDVVNFVSMEFSLTDPRFEPHKWEKYCVLEIGDMLLRSAIGQMSRPMFLYVRTNGTSKIKMKWGMEMRRCLLQSLQQIESMIEAESSVKEKDMTKEFFENKSETWPIGESPKGVEEGSIGKVCRTLLAKSVFNSLYASPQLEGFSAESRKLLLVVQALRDNLEPGTFDLGGLYEAIEECLINDPWVLLNASWFNSFLTHALR</sequence>
<organismHost>
    <name type="scientific">Aves</name>
    <dbReference type="NCBI Taxonomy" id="8782"/>
</organismHost>
<organismHost>
    <name type="scientific">Cetacea</name>
    <name type="common">whales</name>
    <dbReference type="NCBI Taxonomy" id="9721"/>
</organismHost>
<organismHost>
    <name type="scientific">Homo sapiens</name>
    <name type="common">Human</name>
    <dbReference type="NCBI Taxonomy" id="9606"/>
</organismHost>
<organismHost>
    <name type="scientific">Phocidae</name>
    <name type="common">true seals</name>
    <dbReference type="NCBI Taxonomy" id="9709"/>
</organismHost>
<organismHost>
    <name type="scientific">Sus scrofa</name>
    <name type="common">Pig</name>
    <dbReference type="NCBI Taxonomy" id="9823"/>
</organismHost>
<evidence type="ECO:0000250" key="1">
    <source>
        <dbReference type="UniProtKB" id="P03433"/>
    </source>
</evidence>
<evidence type="ECO:0000255" key="2">
    <source>
        <dbReference type="HAMAP-Rule" id="MF_04063"/>
    </source>
</evidence>
<reference key="1">
    <citation type="submission" date="2005-12" db="EMBL/GenBank/DDBJ databases">
        <title>The NIAID influenza genome sequencing project.</title>
        <authorList>
            <person name="Ghedin E."/>
            <person name="Spiro D."/>
            <person name="Miller N."/>
            <person name="Zaborsky J."/>
            <person name="Feldblyum T."/>
            <person name="Subbu V."/>
            <person name="Shumway M."/>
            <person name="Sparenborg J."/>
            <person name="Groveman L."/>
            <person name="Halpin R."/>
            <person name="Sitz J."/>
            <person name="Koo H."/>
            <person name="Salzberg S.L."/>
            <person name="Webster R.G."/>
            <person name="Hoffmann E."/>
            <person name="Krauss S."/>
            <person name="Naeve C."/>
            <person name="Bao Y."/>
            <person name="Bolotov P."/>
            <person name="Dernovoy D."/>
            <person name="Kiryutin B."/>
            <person name="Lipman D.J."/>
            <person name="Tatusova T."/>
        </authorList>
    </citation>
    <scope>NUCLEOTIDE SEQUENCE [GENOMIC RNA]</scope>
</reference>
<gene>
    <name evidence="2" type="primary">PA</name>
</gene>
<keyword id="KW-1157">Cap snatching</keyword>
<keyword id="KW-0255">Endonuclease</keyword>
<keyword id="KW-1262">Eukaryotic host gene expression shutoff by virus</keyword>
<keyword id="KW-1191">Eukaryotic host transcription shutoff by virus</keyword>
<keyword id="KW-1035">Host cytoplasm</keyword>
<keyword id="KW-1190">Host gene expression shutoff by virus</keyword>
<keyword id="KW-1048">Host nucleus</keyword>
<keyword id="KW-0945">Host-virus interaction</keyword>
<keyword id="KW-0378">Hydrolase</keyword>
<keyword id="KW-1104">Inhibition of host RNA polymerase II by virus</keyword>
<keyword id="KW-0464">Manganese</keyword>
<keyword id="KW-0479">Metal-binding</keyword>
<keyword id="KW-0540">Nuclease</keyword>
<keyword id="KW-0597">Phosphoprotein</keyword>
<keyword id="KW-0688">Ribosomal frameshifting</keyword>
<organism>
    <name type="scientific">Influenza A virus (strain A/Memphis/18/1978 H3N2)</name>
    <dbReference type="NCBI Taxonomy" id="383579"/>
    <lineage>
        <taxon>Viruses</taxon>
        <taxon>Riboviria</taxon>
        <taxon>Orthornavirae</taxon>
        <taxon>Negarnaviricota</taxon>
        <taxon>Polyploviricotina</taxon>
        <taxon>Insthoviricetes</taxon>
        <taxon>Articulavirales</taxon>
        <taxon>Orthomyxoviridae</taxon>
        <taxon>Alphainfluenzavirus</taxon>
        <taxon>Alphainfluenzavirus influenzae</taxon>
        <taxon>Influenza A virus</taxon>
    </lineage>
</organism>
<protein>
    <recommendedName>
        <fullName evidence="2">Polymerase acidic protein</fullName>
        <ecNumber evidence="2">3.1.-.-</ecNumber>
    </recommendedName>
    <alternativeName>
        <fullName evidence="2">RNA-directed RNA polymerase subunit P2</fullName>
    </alternativeName>
</protein>
<feature type="chain" id="PRO_0000279256" description="Polymerase acidic protein">
    <location>
        <begin position="1"/>
        <end position="716"/>
    </location>
</feature>
<feature type="short sequence motif" description="Nuclear localization signal 1 (NLS1)" evidence="1 2">
    <location>
        <begin position="124"/>
        <end position="139"/>
    </location>
</feature>
<feature type="short sequence motif" description="Nuclear localization signal 2 (NLS2)" evidence="1 2">
    <location>
        <begin position="184"/>
        <end position="247"/>
    </location>
</feature>
<feature type="binding site" evidence="2">
    <location>
        <position position="41"/>
    </location>
    <ligand>
        <name>Mn(2+)</name>
        <dbReference type="ChEBI" id="CHEBI:29035"/>
        <label>1</label>
    </ligand>
</feature>
<feature type="binding site" evidence="2">
    <location>
        <position position="80"/>
    </location>
    <ligand>
        <name>Mn(2+)</name>
        <dbReference type="ChEBI" id="CHEBI:29035"/>
        <label>2</label>
    </ligand>
</feature>
<feature type="binding site" evidence="2">
    <location>
        <position position="108"/>
    </location>
    <ligand>
        <name>Mn(2+)</name>
        <dbReference type="ChEBI" id="CHEBI:29035"/>
        <label>1</label>
    </ligand>
</feature>
<feature type="binding site" evidence="2">
    <location>
        <position position="108"/>
    </location>
    <ligand>
        <name>Mn(2+)</name>
        <dbReference type="ChEBI" id="CHEBI:29035"/>
        <label>2</label>
    </ligand>
</feature>
<feature type="binding site" evidence="2">
    <location>
        <position position="119"/>
    </location>
    <ligand>
        <name>Mn(2+)</name>
        <dbReference type="ChEBI" id="CHEBI:29035"/>
        <label>1</label>
    </ligand>
</feature>
<feature type="binding site" evidence="2">
    <location>
        <position position="120"/>
    </location>
    <ligand>
        <name>Mn(2+)</name>
        <dbReference type="ChEBI" id="CHEBI:29035"/>
        <label>1</label>
    </ligand>
</feature>
<name>PA_I78A8</name>
<proteinExistence type="inferred from homology"/>
<comment type="function">
    <text evidence="2">Plays an essential role in viral RNA transcription and replication by forming the heterotrimeric polymerase complex together with PB1 and PB2 subunits. The complex transcribes viral mRNAs by using a unique mechanism called cap-snatching. It consists in the hijacking and cleavage of host capped pre-mRNAs. These short capped RNAs are then used as primers for viral mRNAs. The PB2 subunit is responsible for the binding of the 5' cap of cellular pre-mRNAs which are subsequently cleaved after 10-13 nucleotides by the PA subunit that carries the endonuclease activity.</text>
</comment>
<comment type="cofactor">
    <cofactor evidence="2">
        <name>Mn(2+)</name>
        <dbReference type="ChEBI" id="CHEBI:29035"/>
    </cofactor>
    <text evidence="2">Binds 2 manganese ions per subunit.</text>
</comment>
<comment type="subunit">
    <text evidence="1 2">Influenza RNA polymerase is composed of three subunits: PB1, PB2 and PA. Interacts (via C-terminus) with PB1 (via N-terminus).</text>
</comment>
<comment type="subcellular location">
    <subcellularLocation>
        <location evidence="2">Host cytoplasm</location>
    </subcellularLocation>
    <subcellularLocation>
        <location evidence="2">Host nucleus</location>
    </subcellularLocation>
    <text evidence="1 2">PB1 and PA are transported in the host nucleus as a complex.</text>
</comment>
<comment type="alternative products">
    <event type="ribosomal frameshifting"/>
    <isoform>
        <id>Q2VNC6-1</id>
        <name>PA</name>
        <sequence type="displayed"/>
    </isoform>
    <isoform>
        <id>P0DJT3-1</id>
        <name>PA-X</name>
        <sequence type="external"/>
    </isoform>
</comment>
<comment type="PTM">
    <text evidence="1 2">Phosphorylated on serines and threonines by host kinases, including human casein kinase II.</text>
</comment>
<comment type="similarity">
    <text evidence="2">Belongs to the influenza viruses PA family.</text>
</comment>